<keyword id="KW-0627">Porphyrin biosynthesis</keyword>
<keyword id="KW-0808">Transferase</keyword>
<name>HEM3_BACVZ</name>
<accession>A7Z7A5</accession>
<proteinExistence type="inferred from homology"/>
<sequence length="313" mass="34545">MRTIKVGSRRSKLAMTQTKWVINKLKELNPSYNFEIREIVTKGDRILDVTLSKVGGKGLFVKEIEQALLHQEIDMAVHSMKDMPAVLPEGLVIGCIPKREDPRDALISKGHQKLDGIKEGGIIGTSSLRRSAQILAERPDLTIKWIRGNIDTRLQKLETEDYDAIILAAAGLSRMGWKDDVVSEFLEPDRCLPAVGQGALAIECRESDEELLKLFAQFTDEYTQRTVAAERAFLHAMEGGCQVPIAGYASVNDRDEVELVGLVASPDGKTIYKETAAGHDPEEIGKRCAAMMSEKGAKALIDSVKQELDQDGK</sequence>
<evidence type="ECO:0000255" key="1">
    <source>
        <dbReference type="HAMAP-Rule" id="MF_00260"/>
    </source>
</evidence>
<feature type="chain" id="PRO_1000047735" description="Porphobilinogen deaminase">
    <location>
        <begin position="1"/>
        <end position="313"/>
    </location>
</feature>
<feature type="modified residue" description="S-(dipyrrolylmethanemethyl)cysteine" evidence="1">
    <location>
        <position position="241"/>
    </location>
</feature>
<protein>
    <recommendedName>
        <fullName evidence="1">Porphobilinogen deaminase</fullName>
        <shortName evidence="1">PBG</shortName>
        <ecNumber evidence="1">2.5.1.61</ecNumber>
    </recommendedName>
    <alternativeName>
        <fullName evidence="1">Hydroxymethylbilane synthase</fullName>
        <shortName evidence="1">HMBS</shortName>
    </alternativeName>
    <alternativeName>
        <fullName evidence="1">Pre-uroporphyrinogen synthase</fullName>
    </alternativeName>
</protein>
<comment type="function">
    <text evidence="1">Tetrapolymerization of the monopyrrole PBG into the hydroxymethylbilane pre-uroporphyrinogen in several discrete steps.</text>
</comment>
<comment type="catalytic activity">
    <reaction evidence="1">
        <text>4 porphobilinogen + H2O = hydroxymethylbilane + 4 NH4(+)</text>
        <dbReference type="Rhea" id="RHEA:13185"/>
        <dbReference type="ChEBI" id="CHEBI:15377"/>
        <dbReference type="ChEBI" id="CHEBI:28938"/>
        <dbReference type="ChEBI" id="CHEBI:57845"/>
        <dbReference type="ChEBI" id="CHEBI:58126"/>
        <dbReference type="EC" id="2.5.1.61"/>
    </reaction>
</comment>
<comment type="cofactor">
    <cofactor evidence="1">
        <name>dipyrromethane</name>
        <dbReference type="ChEBI" id="CHEBI:60342"/>
    </cofactor>
    <text evidence="1">Binds 1 dipyrromethane group covalently.</text>
</comment>
<comment type="pathway">
    <text evidence="1">Porphyrin-containing compound metabolism; protoporphyrin-IX biosynthesis; coproporphyrinogen-III from 5-aminolevulinate: step 2/4.</text>
</comment>
<comment type="subunit">
    <text evidence="1">Monomer.</text>
</comment>
<comment type="miscellaneous">
    <text evidence="1">The porphobilinogen subunits are added to the dipyrromethane group.</text>
</comment>
<comment type="similarity">
    <text evidence="1">Belongs to the HMBS family.</text>
</comment>
<reference key="1">
    <citation type="journal article" date="2007" name="Nat. Biotechnol.">
        <title>Comparative analysis of the complete genome sequence of the plant growth-promoting bacterium Bacillus amyloliquefaciens FZB42.</title>
        <authorList>
            <person name="Chen X.H."/>
            <person name="Koumoutsi A."/>
            <person name="Scholz R."/>
            <person name="Eisenreich A."/>
            <person name="Schneider K."/>
            <person name="Heinemeyer I."/>
            <person name="Morgenstern B."/>
            <person name="Voss B."/>
            <person name="Hess W.R."/>
            <person name="Reva O."/>
            <person name="Junge H."/>
            <person name="Voigt B."/>
            <person name="Jungblut P.R."/>
            <person name="Vater J."/>
            <person name="Suessmuth R."/>
            <person name="Liesegang H."/>
            <person name="Strittmatter A."/>
            <person name="Gottschalk G."/>
            <person name="Borriss R."/>
        </authorList>
    </citation>
    <scope>NUCLEOTIDE SEQUENCE [LARGE SCALE GENOMIC DNA]</scope>
    <source>
        <strain>DSM 23117 / BGSC 10A6 / LMG 26770 / FZB42</strain>
    </source>
</reference>
<gene>
    <name evidence="1" type="primary">hemC</name>
    <name type="ordered locus">RBAM_025210</name>
</gene>
<organism>
    <name type="scientific">Bacillus velezensis (strain DSM 23117 / BGSC 10A6 / LMG 26770 / FZB42)</name>
    <name type="common">Bacillus amyloliquefaciens subsp. plantarum</name>
    <dbReference type="NCBI Taxonomy" id="326423"/>
    <lineage>
        <taxon>Bacteria</taxon>
        <taxon>Bacillati</taxon>
        <taxon>Bacillota</taxon>
        <taxon>Bacilli</taxon>
        <taxon>Bacillales</taxon>
        <taxon>Bacillaceae</taxon>
        <taxon>Bacillus</taxon>
        <taxon>Bacillus amyloliquefaciens group</taxon>
    </lineage>
</organism>
<dbReference type="EC" id="2.5.1.61" evidence="1"/>
<dbReference type="EMBL" id="CP000560">
    <property type="protein sequence ID" value="ABS74881.1"/>
    <property type="molecule type" value="Genomic_DNA"/>
</dbReference>
<dbReference type="RefSeq" id="WP_012118114.1">
    <property type="nucleotide sequence ID" value="NC_009725.2"/>
</dbReference>
<dbReference type="SMR" id="A7Z7A5"/>
<dbReference type="GeneID" id="93081663"/>
<dbReference type="KEGG" id="bay:RBAM_025210"/>
<dbReference type="HOGENOM" id="CLU_019704_0_2_9"/>
<dbReference type="UniPathway" id="UPA00251">
    <property type="reaction ID" value="UER00319"/>
</dbReference>
<dbReference type="Proteomes" id="UP000001120">
    <property type="component" value="Chromosome"/>
</dbReference>
<dbReference type="GO" id="GO:0005737">
    <property type="term" value="C:cytoplasm"/>
    <property type="evidence" value="ECO:0007669"/>
    <property type="project" value="TreeGrafter"/>
</dbReference>
<dbReference type="GO" id="GO:0004418">
    <property type="term" value="F:hydroxymethylbilane synthase activity"/>
    <property type="evidence" value="ECO:0007669"/>
    <property type="project" value="UniProtKB-UniRule"/>
</dbReference>
<dbReference type="GO" id="GO:0006782">
    <property type="term" value="P:protoporphyrinogen IX biosynthetic process"/>
    <property type="evidence" value="ECO:0007669"/>
    <property type="project" value="UniProtKB-UniRule"/>
</dbReference>
<dbReference type="CDD" id="cd13646">
    <property type="entry name" value="PBP2_EcHMBS_like"/>
    <property type="match status" value="1"/>
</dbReference>
<dbReference type="FunFam" id="3.30.160.40:FF:000001">
    <property type="entry name" value="Porphobilinogen deaminase"/>
    <property type="match status" value="1"/>
</dbReference>
<dbReference type="FunFam" id="3.40.190.10:FF:000004">
    <property type="entry name" value="Porphobilinogen deaminase"/>
    <property type="match status" value="1"/>
</dbReference>
<dbReference type="FunFam" id="3.40.190.10:FF:000005">
    <property type="entry name" value="Porphobilinogen deaminase"/>
    <property type="match status" value="1"/>
</dbReference>
<dbReference type="Gene3D" id="3.40.190.10">
    <property type="entry name" value="Periplasmic binding protein-like II"/>
    <property type="match status" value="2"/>
</dbReference>
<dbReference type="Gene3D" id="3.30.160.40">
    <property type="entry name" value="Porphobilinogen deaminase, C-terminal domain"/>
    <property type="match status" value="1"/>
</dbReference>
<dbReference type="HAMAP" id="MF_00260">
    <property type="entry name" value="Porphobil_deam"/>
    <property type="match status" value="1"/>
</dbReference>
<dbReference type="InterPro" id="IPR000860">
    <property type="entry name" value="HemC"/>
</dbReference>
<dbReference type="InterPro" id="IPR022419">
    <property type="entry name" value="Porphobilin_deaminase_cofac_BS"/>
</dbReference>
<dbReference type="InterPro" id="IPR022417">
    <property type="entry name" value="Porphobilin_deaminase_N"/>
</dbReference>
<dbReference type="InterPro" id="IPR022418">
    <property type="entry name" value="Porphobilinogen_deaminase_C"/>
</dbReference>
<dbReference type="InterPro" id="IPR036803">
    <property type="entry name" value="Porphobilinogen_deaminase_C_sf"/>
</dbReference>
<dbReference type="NCBIfam" id="TIGR00212">
    <property type="entry name" value="hemC"/>
    <property type="match status" value="1"/>
</dbReference>
<dbReference type="PANTHER" id="PTHR11557">
    <property type="entry name" value="PORPHOBILINOGEN DEAMINASE"/>
    <property type="match status" value="1"/>
</dbReference>
<dbReference type="PANTHER" id="PTHR11557:SF0">
    <property type="entry name" value="PORPHOBILINOGEN DEAMINASE"/>
    <property type="match status" value="1"/>
</dbReference>
<dbReference type="Pfam" id="PF01379">
    <property type="entry name" value="Porphobil_deam"/>
    <property type="match status" value="1"/>
</dbReference>
<dbReference type="Pfam" id="PF03900">
    <property type="entry name" value="Porphobil_deamC"/>
    <property type="match status" value="1"/>
</dbReference>
<dbReference type="PIRSF" id="PIRSF001438">
    <property type="entry name" value="4pyrrol_synth_OHMeBilane_synth"/>
    <property type="match status" value="1"/>
</dbReference>
<dbReference type="PRINTS" id="PR00151">
    <property type="entry name" value="PORPHBDMNASE"/>
</dbReference>
<dbReference type="SUPFAM" id="SSF53850">
    <property type="entry name" value="Periplasmic binding protein-like II"/>
    <property type="match status" value="1"/>
</dbReference>
<dbReference type="SUPFAM" id="SSF54782">
    <property type="entry name" value="Porphobilinogen deaminase (hydroxymethylbilane synthase), C-terminal domain"/>
    <property type="match status" value="1"/>
</dbReference>
<dbReference type="PROSITE" id="PS00533">
    <property type="entry name" value="PORPHOBILINOGEN_DEAM"/>
    <property type="match status" value="1"/>
</dbReference>